<proteinExistence type="inferred from homology"/>
<reference key="1">
    <citation type="journal article" date="2008" name="BMC Genomics">
        <title>Acidithiobacillus ferrooxidans metabolism: from genome sequence to industrial applications.</title>
        <authorList>
            <person name="Valdes J."/>
            <person name="Pedroso I."/>
            <person name="Quatrini R."/>
            <person name="Dodson R.J."/>
            <person name="Tettelin H."/>
            <person name="Blake R. II"/>
            <person name="Eisen J.A."/>
            <person name="Holmes D.S."/>
        </authorList>
    </citation>
    <scope>NUCLEOTIDE SEQUENCE [LARGE SCALE GENOMIC DNA]</scope>
    <source>
        <strain>ATCC 23270 / DSM 14882 / CIP 104768 / NCIMB 8455</strain>
    </source>
</reference>
<gene>
    <name evidence="1" type="primary">rpmF</name>
    <name type="ordered locus">AFE_1904</name>
</gene>
<protein>
    <recommendedName>
        <fullName evidence="1">Large ribosomal subunit protein bL32</fullName>
    </recommendedName>
    <alternativeName>
        <fullName evidence="2">50S ribosomal protein L32</fullName>
    </alternativeName>
</protein>
<organism>
    <name type="scientific">Acidithiobacillus ferrooxidans (strain ATCC 23270 / DSM 14882 / CIP 104768 / NCIMB 8455)</name>
    <name type="common">Ferrobacillus ferrooxidans (strain ATCC 23270)</name>
    <dbReference type="NCBI Taxonomy" id="243159"/>
    <lineage>
        <taxon>Bacteria</taxon>
        <taxon>Pseudomonadati</taxon>
        <taxon>Pseudomonadota</taxon>
        <taxon>Acidithiobacillia</taxon>
        <taxon>Acidithiobacillales</taxon>
        <taxon>Acidithiobacillaceae</taxon>
        <taxon>Acidithiobacillus</taxon>
    </lineage>
</organism>
<comment type="similarity">
    <text evidence="1">Belongs to the bacterial ribosomal protein bL32 family.</text>
</comment>
<accession>B7JC05</accession>
<evidence type="ECO:0000255" key="1">
    <source>
        <dbReference type="HAMAP-Rule" id="MF_00340"/>
    </source>
</evidence>
<evidence type="ECO:0000305" key="2"/>
<sequence length="61" mass="6814">MAVPQSKTSRSRRDMRRAHDFLVTVNRSVCANCGAAKLPHHVCPECGFYKGREIVKKAVEA</sequence>
<keyword id="KW-1185">Reference proteome</keyword>
<keyword id="KW-0687">Ribonucleoprotein</keyword>
<keyword id="KW-0689">Ribosomal protein</keyword>
<feature type="chain" id="PRO_1000120076" description="Large ribosomal subunit protein bL32">
    <location>
        <begin position="1"/>
        <end position="61"/>
    </location>
</feature>
<dbReference type="EMBL" id="CP001219">
    <property type="protein sequence ID" value="ACK80908.1"/>
    <property type="molecule type" value="Genomic_DNA"/>
</dbReference>
<dbReference type="RefSeq" id="WP_012536832.1">
    <property type="nucleotide sequence ID" value="NC_011761.1"/>
</dbReference>
<dbReference type="SMR" id="B7JC05"/>
<dbReference type="STRING" id="243159.AFE_1904"/>
<dbReference type="PaxDb" id="243159-AFE_1904"/>
<dbReference type="GeneID" id="65281059"/>
<dbReference type="KEGG" id="afr:AFE_1904"/>
<dbReference type="eggNOG" id="COG0333">
    <property type="taxonomic scope" value="Bacteria"/>
</dbReference>
<dbReference type="HOGENOM" id="CLU_129084_1_3_6"/>
<dbReference type="Proteomes" id="UP000001362">
    <property type="component" value="Chromosome"/>
</dbReference>
<dbReference type="GO" id="GO:0015934">
    <property type="term" value="C:large ribosomal subunit"/>
    <property type="evidence" value="ECO:0007669"/>
    <property type="project" value="InterPro"/>
</dbReference>
<dbReference type="GO" id="GO:0003735">
    <property type="term" value="F:structural constituent of ribosome"/>
    <property type="evidence" value="ECO:0007669"/>
    <property type="project" value="InterPro"/>
</dbReference>
<dbReference type="GO" id="GO:0006412">
    <property type="term" value="P:translation"/>
    <property type="evidence" value="ECO:0007669"/>
    <property type="project" value="UniProtKB-UniRule"/>
</dbReference>
<dbReference type="Gene3D" id="1.20.5.640">
    <property type="entry name" value="Single helix bin"/>
    <property type="match status" value="1"/>
</dbReference>
<dbReference type="HAMAP" id="MF_00340">
    <property type="entry name" value="Ribosomal_bL32"/>
    <property type="match status" value="1"/>
</dbReference>
<dbReference type="InterPro" id="IPR002677">
    <property type="entry name" value="Ribosomal_bL32"/>
</dbReference>
<dbReference type="InterPro" id="IPR044957">
    <property type="entry name" value="Ribosomal_bL32_bact"/>
</dbReference>
<dbReference type="InterPro" id="IPR011332">
    <property type="entry name" value="Ribosomal_zn-bd"/>
</dbReference>
<dbReference type="NCBIfam" id="TIGR01031">
    <property type="entry name" value="rpmF_bact"/>
    <property type="match status" value="1"/>
</dbReference>
<dbReference type="PANTHER" id="PTHR35534">
    <property type="entry name" value="50S RIBOSOMAL PROTEIN L32"/>
    <property type="match status" value="1"/>
</dbReference>
<dbReference type="PANTHER" id="PTHR35534:SF1">
    <property type="entry name" value="LARGE RIBOSOMAL SUBUNIT PROTEIN BL32"/>
    <property type="match status" value="1"/>
</dbReference>
<dbReference type="Pfam" id="PF01783">
    <property type="entry name" value="Ribosomal_L32p"/>
    <property type="match status" value="1"/>
</dbReference>
<dbReference type="SUPFAM" id="SSF57829">
    <property type="entry name" value="Zn-binding ribosomal proteins"/>
    <property type="match status" value="1"/>
</dbReference>
<name>RL32_ACIF2</name>